<sequence length="76" mass="8556">MSPFSLLILVICAFSLFFLINLTRGLSILLVFSKNQLLALLLLSIVSLFSISLISALIFFDLLPSTFFGFILLFFF</sequence>
<name>KANTR_HUMAN</name>
<feature type="signal peptide" evidence="1">
    <location>
        <begin position="1"/>
        <end position="25"/>
    </location>
</feature>
<feature type="chain" id="PRO_0000458139" description="KANTR integral membrane protein" evidence="1">
    <location>
        <begin position="26"/>
        <end position="76"/>
    </location>
</feature>
<feature type="topological domain" description="Extracellular" evidence="2">
    <location>
        <begin position="26"/>
        <end position="34"/>
    </location>
</feature>
<feature type="transmembrane region" description="Helical" evidence="1">
    <location>
        <begin position="35"/>
        <end position="55"/>
    </location>
</feature>
<feature type="topological domain" description="Cytoplasmic" evidence="2">
    <location>
        <begin position="56"/>
        <end position="76"/>
    </location>
</feature>
<accession>A0A1W2PQU2</accession>
<dbReference type="EMBL" id="AL139396">
    <property type="status" value="NOT_ANNOTATED_CDS"/>
    <property type="molecule type" value="Genomic_DNA"/>
</dbReference>
<dbReference type="EMBL" id="AL591212">
    <property type="status" value="NOT_ANNOTATED_CDS"/>
    <property type="molecule type" value="Genomic_DNA"/>
</dbReference>
<dbReference type="RefSeq" id="NP_001384377.1">
    <property type="nucleotide sequence ID" value="NM_001397448.1"/>
</dbReference>
<dbReference type="RefSeq" id="NP_001384379.1">
    <property type="nucleotide sequence ID" value="NM_001397450.1"/>
</dbReference>
<dbReference type="RefSeq" id="NP_001384380.1">
    <property type="nucleotide sequence ID" value="NM_001397451.1"/>
</dbReference>
<dbReference type="RefSeq" id="NP_001384381.1">
    <property type="nucleotide sequence ID" value="NM_001397452.1"/>
</dbReference>
<dbReference type="RefSeq" id="NP_001384382.1">
    <property type="nucleotide sequence ID" value="NM_001397453.1"/>
</dbReference>
<dbReference type="SMR" id="A0A1W2PQU2"/>
<dbReference type="BioMuta" id="KANTR"/>
<dbReference type="PeptideAtlas" id="A0A1W2PQU2"/>
<dbReference type="Ensembl" id="ENST00000604062.7">
    <property type="protein sequence ID" value="ENSP00000492284.1"/>
    <property type="gene ID" value="ENSG00000232593.8"/>
</dbReference>
<dbReference type="GeneID" id="102723508"/>
<dbReference type="MANE-Select" id="ENST00000604062.7">
    <property type="protein sequence ID" value="ENSP00000492284.1"/>
    <property type="RefSeq nucleotide sequence ID" value="NM_001397448.1"/>
    <property type="RefSeq protein sequence ID" value="NP_001384377.1"/>
</dbReference>
<dbReference type="AGR" id="HGNC:49510"/>
<dbReference type="GeneCards" id="KANTR"/>
<dbReference type="HGNC" id="HGNC:49510">
    <property type="gene designation" value="KANTR"/>
</dbReference>
<dbReference type="VEuPathDB" id="HostDB:ENSG00000232593"/>
<dbReference type="GeneTree" id="ENSGT00980000198762"/>
<dbReference type="InParanoid" id="A0A1W2PQU2"/>
<dbReference type="OrthoDB" id="9633258at2759"/>
<dbReference type="PAN-GO" id="A0A1W2PQU2">
    <property type="GO annotations" value="0 GO annotations based on evolutionary models"/>
</dbReference>
<dbReference type="ChiTaRS" id="KANTR">
    <property type="organism name" value="human"/>
</dbReference>
<dbReference type="PRO" id="PR:A0A1W2PQU2"/>
<dbReference type="Proteomes" id="UP000005640">
    <property type="component" value="Chromosome X"/>
</dbReference>
<dbReference type="RNAct" id="A0A1W2PQU2">
    <property type="molecule type" value="protein"/>
</dbReference>
<dbReference type="Bgee" id="ENSG00000232593">
    <property type="expression patterns" value="Expressed in upper arm skin and 182 other cell types or tissues"/>
</dbReference>
<dbReference type="GO" id="GO:0016020">
    <property type="term" value="C:membrane"/>
    <property type="evidence" value="ECO:0007669"/>
    <property type="project" value="UniProtKB-SubCell"/>
</dbReference>
<keyword id="KW-0472">Membrane</keyword>
<keyword id="KW-1185">Reference proteome</keyword>
<keyword id="KW-0732">Signal</keyword>
<keyword id="KW-0812">Transmembrane</keyword>
<keyword id="KW-1133">Transmembrane helix</keyword>
<proteinExistence type="inferred from homology"/>
<gene>
    <name evidence="3" type="primary">KANTR</name>
</gene>
<organism>
    <name type="scientific">Homo sapiens</name>
    <name type="common">Human</name>
    <dbReference type="NCBI Taxonomy" id="9606"/>
    <lineage>
        <taxon>Eukaryota</taxon>
        <taxon>Metazoa</taxon>
        <taxon>Chordata</taxon>
        <taxon>Craniata</taxon>
        <taxon>Vertebrata</taxon>
        <taxon>Euteleostomi</taxon>
        <taxon>Mammalia</taxon>
        <taxon>Eutheria</taxon>
        <taxon>Euarchontoglires</taxon>
        <taxon>Primates</taxon>
        <taxon>Haplorrhini</taxon>
        <taxon>Catarrhini</taxon>
        <taxon>Hominidae</taxon>
        <taxon>Homo</taxon>
    </lineage>
</organism>
<evidence type="ECO:0000255" key="1"/>
<evidence type="ECO:0000305" key="2"/>
<evidence type="ECO:0000312" key="3">
    <source>
        <dbReference type="HGNC" id="HGNC:49510"/>
    </source>
</evidence>
<comment type="subcellular location">
    <subcellularLocation>
        <location evidence="1">Membrane</location>
        <topology evidence="1">Single-pass type I membrane protein</topology>
    </subcellularLocation>
</comment>
<reference key="1">
    <citation type="journal article" date="2005" name="Nature">
        <title>The DNA sequence of the human X chromosome.</title>
        <authorList>
            <person name="Ross M.T."/>
            <person name="Grafham D.V."/>
            <person name="Coffey A.J."/>
            <person name="Scherer S."/>
            <person name="McLay K."/>
            <person name="Muzny D."/>
            <person name="Platzer M."/>
            <person name="Howell G.R."/>
            <person name="Burrows C."/>
            <person name="Bird C.P."/>
            <person name="Frankish A."/>
            <person name="Lovell F.L."/>
            <person name="Howe K.L."/>
            <person name="Ashurst J.L."/>
            <person name="Fulton R.S."/>
            <person name="Sudbrak R."/>
            <person name="Wen G."/>
            <person name="Jones M.C."/>
            <person name="Hurles M.E."/>
            <person name="Andrews T.D."/>
            <person name="Scott C.E."/>
            <person name="Searle S."/>
            <person name="Ramser J."/>
            <person name="Whittaker A."/>
            <person name="Deadman R."/>
            <person name="Carter N.P."/>
            <person name="Hunt S.E."/>
            <person name="Chen R."/>
            <person name="Cree A."/>
            <person name="Gunaratne P."/>
            <person name="Havlak P."/>
            <person name="Hodgson A."/>
            <person name="Metzker M.L."/>
            <person name="Richards S."/>
            <person name="Scott G."/>
            <person name="Steffen D."/>
            <person name="Sodergren E."/>
            <person name="Wheeler D.A."/>
            <person name="Worley K.C."/>
            <person name="Ainscough R."/>
            <person name="Ambrose K.D."/>
            <person name="Ansari-Lari M.A."/>
            <person name="Aradhya S."/>
            <person name="Ashwell R.I."/>
            <person name="Babbage A.K."/>
            <person name="Bagguley C.L."/>
            <person name="Ballabio A."/>
            <person name="Banerjee R."/>
            <person name="Barker G.E."/>
            <person name="Barlow K.F."/>
            <person name="Barrett I.P."/>
            <person name="Bates K.N."/>
            <person name="Beare D.M."/>
            <person name="Beasley H."/>
            <person name="Beasley O."/>
            <person name="Beck A."/>
            <person name="Bethel G."/>
            <person name="Blechschmidt K."/>
            <person name="Brady N."/>
            <person name="Bray-Allen S."/>
            <person name="Bridgeman A.M."/>
            <person name="Brown A.J."/>
            <person name="Brown M.J."/>
            <person name="Bonnin D."/>
            <person name="Bruford E.A."/>
            <person name="Buhay C."/>
            <person name="Burch P."/>
            <person name="Burford D."/>
            <person name="Burgess J."/>
            <person name="Burrill W."/>
            <person name="Burton J."/>
            <person name="Bye J.M."/>
            <person name="Carder C."/>
            <person name="Carrel L."/>
            <person name="Chako J."/>
            <person name="Chapman J.C."/>
            <person name="Chavez D."/>
            <person name="Chen E."/>
            <person name="Chen G."/>
            <person name="Chen Y."/>
            <person name="Chen Z."/>
            <person name="Chinault C."/>
            <person name="Ciccodicola A."/>
            <person name="Clark S.Y."/>
            <person name="Clarke G."/>
            <person name="Clee C.M."/>
            <person name="Clegg S."/>
            <person name="Clerc-Blankenburg K."/>
            <person name="Clifford K."/>
            <person name="Cobley V."/>
            <person name="Cole C.G."/>
            <person name="Conquer J.S."/>
            <person name="Corby N."/>
            <person name="Connor R.E."/>
            <person name="David R."/>
            <person name="Davies J."/>
            <person name="Davis C."/>
            <person name="Davis J."/>
            <person name="Delgado O."/>
            <person name="Deshazo D."/>
            <person name="Dhami P."/>
            <person name="Ding Y."/>
            <person name="Dinh H."/>
            <person name="Dodsworth S."/>
            <person name="Draper H."/>
            <person name="Dugan-Rocha S."/>
            <person name="Dunham A."/>
            <person name="Dunn M."/>
            <person name="Durbin K.J."/>
            <person name="Dutta I."/>
            <person name="Eades T."/>
            <person name="Ellwood M."/>
            <person name="Emery-Cohen A."/>
            <person name="Errington H."/>
            <person name="Evans K.L."/>
            <person name="Faulkner L."/>
            <person name="Francis F."/>
            <person name="Frankland J."/>
            <person name="Fraser A.E."/>
            <person name="Galgoczy P."/>
            <person name="Gilbert J."/>
            <person name="Gill R."/>
            <person name="Gloeckner G."/>
            <person name="Gregory S.G."/>
            <person name="Gribble S."/>
            <person name="Griffiths C."/>
            <person name="Grocock R."/>
            <person name="Gu Y."/>
            <person name="Gwilliam R."/>
            <person name="Hamilton C."/>
            <person name="Hart E.A."/>
            <person name="Hawes A."/>
            <person name="Heath P.D."/>
            <person name="Heitmann K."/>
            <person name="Hennig S."/>
            <person name="Hernandez J."/>
            <person name="Hinzmann B."/>
            <person name="Ho S."/>
            <person name="Hoffs M."/>
            <person name="Howden P.J."/>
            <person name="Huckle E.J."/>
            <person name="Hume J."/>
            <person name="Hunt P.J."/>
            <person name="Hunt A.R."/>
            <person name="Isherwood J."/>
            <person name="Jacob L."/>
            <person name="Johnson D."/>
            <person name="Jones S."/>
            <person name="de Jong P.J."/>
            <person name="Joseph S.S."/>
            <person name="Keenan S."/>
            <person name="Kelly S."/>
            <person name="Kershaw J.K."/>
            <person name="Khan Z."/>
            <person name="Kioschis P."/>
            <person name="Klages S."/>
            <person name="Knights A.J."/>
            <person name="Kosiura A."/>
            <person name="Kovar-Smith C."/>
            <person name="Laird G.K."/>
            <person name="Langford C."/>
            <person name="Lawlor S."/>
            <person name="Leversha M."/>
            <person name="Lewis L."/>
            <person name="Liu W."/>
            <person name="Lloyd C."/>
            <person name="Lloyd D.M."/>
            <person name="Loulseged H."/>
            <person name="Loveland J.E."/>
            <person name="Lovell J.D."/>
            <person name="Lozado R."/>
            <person name="Lu J."/>
            <person name="Lyne R."/>
            <person name="Ma J."/>
            <person name="Maheshwari M."/>
            <person name="Matthews L.H."/>
            <person name="McDowall J."/>
            <person name="McLaren S."/>
            <person name="McMurray A."/>
            <person name="Meidl P."/>
            <person name="Meitinger T."/>
            <person name="Milne S."/>
            <person name="Miner G."/>
            <person name="Mistry S.L."/>
            <person name="Morgan M."/>
            <person name="Morris S."/>
            <person name="Mueller I."/>
            <person name="Mullikin J.C."/>
            <person name="Nguyen N."/>
            <person name="Nordsiek G."/>
            <person name="Nyakatura G."/>
            <person name="O'dell C.N."/>
            <person name="Okwuonu G."/>
            <person name="Palmer S."/>
            <person name="Pandian R."/>
            <person name="Parker D."/>
            <person name="Parrish J."/>
            <person name="Pasternak S."/>
            <person name="Patel D."/>
            <person name="Pearce A.V."/>
            <person name="Pearson D.M."/>
            <person name="Pelan S.E."/>
            <person name="Perez L."/>
            <person name="Porter K.M."/>
            <person name="Ramsey Y."/>
            <person name="Reichwald K."/>
            <person name="Rhodes S."/>
            <person name="Ridler K.A."/>
            <person name="Schlessinger D."/>
            <person name="Schueler M.G."/>
            <person name="Sehra H.K."/>
            <person name="Shaw-Smith C."/>
            <person name="Shen H."/>
            <person name="Sheridan E.M."/>
            <person name="Shownkeen R."/>
            <person name="Skuce C.D."/>
            <person name="Smith M.L."/>
            <person name="Sotheran E.C."/>
            <person name="Steingruber H.E."/>
            <person name="Steward C.A."/>
            <person name="Storey R."/>
            <person name="Swann R.M."/>
            <person name="Swarbreck D."/>
            <person name="Tabor P.E."/>
            <person name="Taudien S."/>
            <person name="Taylor T."/>
            <person name="Teague B."/>
            <person name="Thomas K."/>
            <person name="Thorpe A."/>
            <person name="Timms K."/>
            <person name="Tracey A."/>
            <person name="Trevanion S."/>
            <person name="Tromans A.C."/>
            <person name="d'Urso M."/>
            <person name="Verduzco D."/>
            <person name="Villasana D."/>
            <person name="Waldron L."/>
            <person name="Wall M."/>
            <person name="Wang Q."/>
            <person name="Warren J."/>
            <person name="Warry G.L."/>
            <person name="Wei X."/>
            <person name="West A."/>
            <person name="Whitehead S.L."/>
            <person name="Whiteley M.N."/>
            <person name="Wilkinson J.E."/>
            <person name="Willey D.L."/>
            <person name="Williams G."/>
            <person name="Williams L."/>
            <person name="Williamson A."/>
            <person name="Williamson H."/>
            <person name="Wilming L."/>
            <person name="Woodmansey R.L."/>
            <person name="Wray P.W."/>
            <person name="Yen J."/>
            <person name="Zhang J."/>
            <person name="Zhou J."/>
            <person name="Zoghbi H."/>
            <person name="Zorilla S."/>
            <person name="Buck D."/>
            <person name="Reinhardt R."/>
            <person name="Poustka A."/>
            <person name="Rosenthal A."/>
            <person name="Lehrach H."/>
            <person name="Meindl A."/>
            <person name="Minx P.J."/>
            <person name="Hillier L.W."/>
            <person name="Willard H.F."/>
            <person name="Wilson R.K."/>
            <person name="Waterston R.H."/>
            <person name="Rice C.M."/>
            <person name="Vaudin M."/>
            <person name="Coulson A."/>
            <person name="Nelson D.L."/>
            <person name="Weinstock G."/>
            <person name="Sulston J.E."/>
            <person name="Durbin R.M."/>
            <person name="Hubbard T."/>
            <person name="Gibbs R.A."/>
            <person name="Beck S."/>
            <person name="Rogers J."/>
            <person name="Bentley D.R."/>
        </authorList>
    </citation>
    <scope>NUCLEOTIDE SEQUENCE [LARGE SCALE GENOMIC DNA]</scope>
</reference>
<protein>
    <recommendedName>
        <fullName evidence="2">KANTR integral membrane protein</fullName>
    </recommendedName>
</protein>